<dbReference type="EMBL" id="AB008264">
    <property type="protein sequence ID" value="BAB09191.1"/>
    <property type="status" value="ALT_SEQ"/>
    <property type="molecule type" value="Genomic_DNA"/>
</dbReference>
<dbReference type="EMBL" id="CP002688">
    <property type="protein sequence ID" value="AED94882.1"/>
    <property type="molecule type" value="Genomic_DNA"/>
</dbReference>
<dbReference type="EMBL" id="CP002688">
    <property type="protein sequence ID" value="AED94883.1"/>
    <property type="molecule type" value="Genomic_DNA"/>
</dbReference>
<dbReference type="EMBL" id="CP002688">
    <property type="protein sequence ID" value="AED94884.1"/>
    <property type="molecule type" value="Genomic_DNA"/>
</dbReference>
<dbReference type="EMBL" id="AK118095">
    <property type="protein sequence ID" value="BAC42723.1"/>
    <property type="molecule type" value="mRNA"/>
</dbReference>
<dbReference type="EMBL" id="BT005599">
    <property type="protein sequence ID" value="AAO64019.1"/>
    <property type="molecule type" value="mRNA"/>
</dbReference>
<dbReference type="EMBL" id="AK175580">
    <property type="protein sequence ID" value="BAD43343.1"/>
    <property type="molecule type" value="mRNA"/>
</dbReference>
<dbReference type="EMBL" id="AY088816">
    <property type="protein sequence ID" value="AAM67125.1"/>
    <property type="molecule type" value="mRNA"/>
</dbReference>
<dbReference type="RefSeq" id="NP_001031998.1">
    <molecule id="Q8L8T7-2"/>
    <property type="nucleotide sequence ID" value="NM_001036921.2"/>
</dbReference>
<dbReference type="RefSeq" id="NP_568615.3">
    <molecule id="Q8L8T7-1"/>
    <property type="nucleotide sequence ID" value="NM_123655.5"/>
</dbReference>
<dbReference type="RefSeq" id="NP_851121.1">
    <molecule id="Q8L8T7-1"/>
    <property type="nucleotide sequence ID" value="NM_180790.2"/>
</dbReference>
<dbReference type="FunCoup" id="Q8L8T7">
    <property type="interactions" value="91"/>
</dbReference>
<dbReference type="IntAct" id="Q8L8T7">
    <property type="interactions" value="1"/>
</dbReference>
<dbReference type="STRING" id="3702.Q8L8T7"/>
<dbReference type="PaxDb" id="3702-AT5G42900.2"/>
<dbReference type="ProteomicsDB" id="175586">
    <molecule id="Q8L8T7-1"/>
</dbReference>
<dbReference type="ProteomicsDB" id="211584"/>
<dbReference type="EnsemblPlants" id="AT5G42900.1">
    <molecule id="Q8L8T7-1"/>
    <property type="protein sequence ID" value="AT5G42900.1"/>
    <property type="gene ID" value="AT5G42900"/>
</dbReference>
<dbReference type="EnsemblPlants" id="AT5G42900.2">
    <molecule id="Q8L8T7-1"/>
    <property type="protein sequence ID" value="AT5G42900.2"/>
    <property type="gene ID" value="AT5G42900"/>
</dbReference>
<dbReference type="EnsemblPlants" id="AT5G42900.3">
    <molecule id="Q8L8T7-2"/>
    <property type="protein sequence ID" value="AT5G42900.3"/>
    <property type="gene ID" value="AT5G42900"/>
</dbReference>
<dbReference type="GeneID" id="834301"/>
<dbReference type="Gramene" id="AT5G42900.1">
    <molecule id="Q8L8T7-1"/>
    <property type="protein sequence ID" value="AT5G42900.1"/>
    <property type="gene ID" value="AT5G42900"/>
</dbReference>
<dbReference type="Gramene" id="AT5G42900.2">
    <molecule id="Q8L8T7-1"/>
    <property type="protein sequence ID" value="AT5G42900.2"/>
    <property type="gene ID" value="AT5G42900"/>
</dbReference>
<dbReference type="Gramene" id="AT5G42900.3">
    <molecule id="Q8L8T7-2"/>
    <property type="protein sequence ID" value="AT5G42900.3"/>
    <property type="gene ID" value="AT5G42900"/>
</dbReference>
<dbReference type="KEGG" id="ath:AT5G42900"/>
<dbReference type="Araport" id="AT5G42900"/>
<dbReference type="TAIR" id="AT5G42900">
    <property type="gene designation" value="COR27"/>
</dbReference>
<dbReference type="eggNOG" id="ENOG502S18J">
    <property type="taxonomic scope" value="Eukaryota"/>
</dbReference>
<dbReference type="HOGENOM" id="CLU_075435_2_0_1"/>
<dbReference type="InParanoid" id="Q8L8T7"/>
<dbReference type="OMA" id="KTHCISS"/>
<dbReference type="OrthoDB" id="1923282at2759"/>
<dbReference type="PhylomeDB" id="Q8L8T7"/>
<dbReference type="PRO" id="PR:Q8L8T7"/>
<dbReference type="Proteomes" id="UP000006548">
    <property type="component" value="Chromosome 5"/>
</dbReference>
<dbReference type="ExpressionAtlas" id="Q8L8T7">
    <property type="expression patterns" value="baseline and differential"/>
</dbReference>
<dbReference type="GO" id="GO:0005634">
    <property type="term" value="C:nucleus"/>
    <property type="evidence" value="ECO:0000314"/>
    <property type="project" value="UniProtKB"/>
</dbReference>
<dbReference type="GO" id="GO:0045892">
    <property type="term" value="P:negative regulation of DNA-templated transcription"/>
    <property type="evidence" value="ECO:0000314"/>
    <property type="project" value="UniProtKB"/>
</dbReference>
<dbReference type="GO" id="GO:0042752">
    <property type="term" value="P:regulation of circadian rhythm"/>
    <property type="evidence" value="ECO:0000315"/>
    <property type="project" value="UniProtKB"/>
</dbReference>
<dbReference type="GO" id="GO:2000028">
    <property type="term" value="P:regulation of photoperiodism, flowering"/>
    <property type="evidence" value="ECO:0000315"/>
    <property type="project" value="UniProtKB"/>
</dbReference>
<dbReference type="GO" id="GO:0009737">
    <property type="term" value="P:response to abscisic acid"/>
    <property type="evidence" value="ECO:0000270"/>
    <property type="project" value="UniProtKB"/>
</dbReference>
<dbReference type="GO" id="GO:0009646">
    <property type="term" value="P:response to absence of light"/>
    <property type="evidence" value="ECO:0000270"/>
    <property type="project" value="UniProtKB"/>
</dbReference>
<dbReference type="GO" id="GO:0009637">
    <property type="term" value="P:response to blue light"/>
    <property type="evidence" value="ECO:0000270"/>
    <property type="project" value="UniProtKB"/>
</dbReference>
<dbReference type="GO" id="GO:0009409">
    <property type="term" value="P:response to cold"/>
    <property type="evidence" value="ECO:0000315"/>
    <property type="project" value="TAIR"/>
</dbReference>
<dbReference type="GO" id="GO:0010114">
    <property type="term" value="P:response to red light"/>
    <property type="evidence" value="ECO:0000270"/>
    <property type="project" value="UniProtKB"/>
</dbReference>
<dbReference type="GO" id="GO:0009615">
    <property type="term" value="P:response to virus"/>
    <property type="evidence" value="ECO:0000270"/>
    <property type="project" value="UniProtKB"/>
</dbReference>
<dbReference type="GO" id="GO:0048511">
    <property type="term" value="P:rhythmic process"/>
    <property type="evidence" value="ECO:0007669"/>
    <property type="project" value="UniProtKB-KW"/>
</dbReference>
<dbReference type="GO" id="GO:0010228">
    <property type="term" value="P:vegetative to reproductive phase transition of meristem"/>
    <property type="evidence" value="ECO:0000315"/>
    <property type="project" value="TAIR"/>
</dbReference>
<dbReference type="InterPro" id="IPR044678">
    <property type="entry name" value="COR27/28"/>
</dbReference>
<dbReference type="PANTHER" id="PTHR33676">
    <property type="entry name" value="COLD REGULATED PROTEIN 27"/>
    <property type="match status" value="1"/>
</dbReference>
<dbReference type="PANTHER" id="PTHR33676:SF3">
    <property type="entry name" value="COLD-REGULATED PROTEIN 27"/>
    <property type="match status" value="1"/>
</dbReference>
<proteinExistence type="evidence at protein level"/>
<organism>
    <name type="scientific">Arabidopsis thaliana</name>
    <name type="common">Mouse-ear cress</name>
    <dbReference type="NCBI Taxonomy" id="3702"/>
    <lineage>
        <taxon>Eukaryota</taxon>
        <taxon>Viridiplantae</taxon>
        <taxon>Streptophyta</taxon>
        <taxon>Embryophyta</taxon>
        <taxon>Tracheophyta</taxon>
        <taxon>Spermatophyta</taxon>
        <taxon>Magnoliopsida</taxon>
        <taxon>eudicotyledons</taxon>
        <taxon>Gunneridae</taxon>
        <taxon>Pentapetalae</taxon>
        <taxon>rosids</taxon>
        <taxon>malvids</taxon>
        <taxon>Brassicales</taxon>
        <taxon>Brassicaceae</taxon>
        <taxon>Camelineae</taxon>
        <taxon>Arabidopsis</taxon>
    </lineage>
</organism>
<evidence type="ECO:0000256" key="1">
    <source>
        <dbReference type="SAM" id="MobiDB-lite"/>
    </source>
</evidence>
<evidence type="ECO:0000269" key="2">
    <source>
    </source>
</evidence>
<evidence type="ECO:0000269" key="3">
    <source>
    </source>
</evidence>
<evidence type="ECO:0000269" key="4">
    <source>
    </source>
</evidence>
<evidence type="ECO:0000269" key="5">
    <source>
    </source>
</evidence>
<evidence type="ECO:0000269" key="6">
    <source>
    </source>
</evidence>
<evidence type="ECO:0000303" key="7">
    <source>
    </source>
</evidence>
<evidence type="ECO:0000305" key="8"/>
<evidence type="ECO:0000312" key="9">
    <source>
        <dbReference type="Araport" id="AT5G42900"/>
    </source>
</evidence>
<evidence type="ECO:0000312" key="10">
    <source>
        <dbReference type="EMBL" id="BAB09191.1"/>
    </source>
</evidence>
<protein>
    <recommendedName>
        <fullName evidence="7">Cold-regulated protein 27</fullName>
    </recommendedName>
</protein>
<reference key="1">
    <citation type="journal article" date="1997" name="DNA Res.">
        <title>Structural analysis of Arabidopsis thaliana chromosome 5. III. Sequence features of the regions of 1,191,918 bp covered by seventeen physically assigned P1 clones.</title>
        <authorList>
            <person name="Nakamura Y."/>
            <person name="Sato S."/>
            <person name="Kaneko T."/>
            <person name="Kotani H."/>
            <person name="Asamizu E."/>
            <person name="Miyajima N."/>
            <person name="Tabata S."/>
        </authorList>
    </citation>
    <scope>NUCLEOTIDE SEQUENCE [LARGE SCALE GENOMIC DNA]</scope>
    <source>
        <strain>cv. Columbia</strain>
    </source>
</reference>
<reference key="2">
    <citation type="journal article" date="2017" name="Plant J.">
        <title>Araport11: a complete reannotation of the Arabidopsis thaliana reference genome.</title>
        <authorList>
            <person name="Cheng C.Y."/>
            <person name="Krishnakumar V."/>
            <person name="Chan A.P."/>
            <person name="Thibaud-Nissen F."/>
            <person name="Schobel S."/>
            <person name="Town C.D."/>
        </authorList>
    </citation>
    <scope>GENOME REANNOTATION</scope>
    <source>
        <strain>cv. Columbia</strain>
    </source>
</reference>
<reference key="3">
    <citation type="journal article" date="2002" name="Science">
        <title>Functional annotation of a full-length Arabidopsis cDNA collection.</title>
        <authorList>
            <person name="Seki M."/>
            <person name="Narusaka M."/>
            <person name="Kamiya A."/>
            <person name="Ishida J."/>
            <person name="Satou M."/>
            <person name="Sakurai T."/>
            <person name="Nakajima M."/>
            <person name="Enju A."/>
            <person name="Akiyama K."/>
            <person name="Oono Y."/>
            <person name="Muramatsu M."/>
            <person name="Hayashizaki Y."/>
            <person name="Kawai J."/>
            <person name="Carninci P."/>
            <person name="Itoh M."/>
            <person name="Ishii Y."/>
            <person name="Arakawa T."/>
            <person name="Shibata K."/>
            <person name="Shinagawa A."/>
            <person name="Shinozaki K."/>
        </authorList>
    </citation>
    <scope>NUCLEOTIDE SEQUENCE [LARGE SCALE MRNA]</scope>
    <source>
        <strain>cv. Columbia</strain>
    </source>
</reference>
<reference key="4">
    <citation type="journal article" date="2003" name="Science">
        <title>Empirical analysis of transcriptional activity in the Arabidopsis genome.</title>
        <authorList>
            <person name="Yamada K."/>
            <person name="Lim J."/>
            <person name="Dale J.M."/>
            <person name="Chen H."/>
            <person name="Shinn P."/>
            <person name="Palm C.J."/>
            <person name="Southwick A.M."/>
            <person name="Wu H.C."/>
            <person name="Kim C.J."/>
            <person name="Nguyen M."/>
            <person name="Pham P.K."/>
            <person name="Cheuk R.F."/>
            <person name="Karlin-Newmann G."/>
            <person name="Liu S.X."/>
            <person name="Lam B."/>
            <person name="Sakano H."/>
            <person name="Wu T."/>
            <person name="Yu G."/>
            <person name="Miranda M."/>
            <person name="Quach H.L."/>
            <person name="Tripp M."/>
            <person name="Chang C.H."/>
            <person name="Lee J.M."/>
            <person name="Toriumi M.J."/>
            <person name="Chan M.M."/>
            <person name="Tang C.C."/>
            <person name="Onodera C.S."/>
            <person name="Deng J.M."/>
            <person name="Akiyama K."/>
            <person name="Ansari Y."/>
            <person name="Arakawa T."/>
            <person name="Banh J."/>
            <person name="Banno F."/>
            <person name="Bowser L."/>
            <person name="Brooks S.Y."/>
            <person name="Carninci P."/>
            <person name="Chao Q."/>
            <person name="Choy N."/>
            <person name="Enju A."/>
            <person name="Goldsmith A.D."/>
            <person name="Gurjal M."/>
            <person name="Hansen N.F."/>
            <person name="Hayashizaki Y."/>
            <person name="Johnson-Hopson C."/>
            <person name="Hsuan V.W."/>
            <person name="Iida K."/>
            <person name="Karnes M."/>
            <person name="Khan S."/>
            <person name="Koesema E."/>
            <person name="Ishida J."/>
            <person name="Jiang P.X."/>
            <person name="Jones T."/>
            <person name="Kawai J."/>
            <person name="Kamiya A."/>
            <person name="Meyers C."/>
            <person name="Nakajima M."/>
            <person name="Narusaka M."/>
            <person name="Seki M."/>
            <person name="Sakurai T."/>
            <person name="Satou M."/>
            <person name="Tamse R."/>
            <person name="Vaysberg M."/>
            <person name="Wallender E.K."/>
            <person name="Wong C."/>
            <person name="Yamamura Y."/>
            <person name="Yuan S."/>
            <person name="Shinozaki K."/>
            <person name="Davis R.W."/>
            <person name="Theologis A."/>
            <person name="Ecker J.R."/>
        </authorList>
    </citation>
    <scope>NUCLEOTIDE SEQUENCE [LARGE SCALE MRNA]</scope>
    <source>
        <strain>cv. Columbia</strain>
    </source>
</reference>
<reference key="5">
    <citation type="submission" date="2004-09" db="EMBL/GenBank/DDBJ databases">
        <title>Large-scale analysis of RIKEN Arabidopsis full-length (RAFL) cDNAs.</title>
        <authorList>
            <person name="Totoki Y."/>
            <person name="Seki M."/>
            <person name="Ishida J."/>
            <person name="Nakajima M."/>
            <person name="Enju A."/>
            <person name="Kamiya A."/>
            <person name="Narusaka M."/>
            <person name="Shin-i T."/>
            <person name="Nakagawa M."/>
            <person name="Sakamoto N."/>
            <person name="Oishi K."/>
            <person name="Kohara Y."/>
            <person name="Kobayashi M."/>
            <person name="Toyoda A."/>
            <person name="Sakaki Y."/>
            <person name="Sakurai T."/>
            <person name="Iida K."/>
            <person name="Akiyama K."/>
            <person name="Satou M."/>
            <person name="Toyoda T."/>
            <person name="Konagaya A."/>
            <person name="Carninci P."/>
            <person name="Kawai J."/>
            <person name="Hayashizaki Y."/>
            <person name="Shinozaki K."/>
        </authorList>
    </citation>
    <scope>NUCLEOTIDE SEQUENCE [LARGE SCALE MRNA]</scope>
    <source>
        <strain>cv. Columbia</strain>
    </source>
</reference>
<reference key="6">
    <citation type="submission" date="2002-03" db="EMBL/GenBank/DDBJ databases">
        <title>Full-length cDNA from Arabidopsis thaliana.</title>
        <authorList>
            <person name="Brover V.V."/>
            <person name="Troukhan M.E."/>
            <person name="Alexandrov N.A."/>
            <person name="Lu Y.-P."/>
            <person name="Flavell R.B."/>
            <person name="Feldmann K.A."/>
        </authorList>
    </citation>
    <scope>NUCLEOTIDE SEQUENCE [LARGE SCALE MRNA]</scope>
</reference>
<reference key="7">
    <citation type="journal article" date="2004" name="Plant Cell Physiol.">
        <title>Comparative analysis of expressed sequence tags in resistant and susceptible ecotypes of Arabidopsis thaliana infected with cucumber mosaic virus.</title>
        <authorList>
            <person name="Ishihara T."/>
            <person name="Sakurai N."/>
            <person name="Sekine K.-T."/>
            <person name="Hase S."/>
            <person name="Ikegami M."/>
            <person name="Shibata D."/>
            <person name="Takahashi H."/>
        </authorList>
    </citation>
    <scope>INDUCTION BY CUCUMBER MOSAIC VIRUS</scope>
    <source>
        <strain>cv. C24</strain>
        <strain>cv. Columbia</strain>
    </source>
</reference>
<reference key="8">
    <citation type="journal article" date="2007" name="EMBO J.">
        <title>Pseudomonas syringae pv. tomato hijacks the Arabidopsis abscisic acid signalling pathway to cause disease.</title>
        <authorList>
            <person name="de Torres-Zabala M."/>
            <person name="Truman W."/>
            <person name="Bennett M.H."/>
            <person name="Lafforgue G."/>
            <person name="Mansfield J.W."/>
            <person name="Rodriguez Egea P."/>
            <person name="Boegre L."/>
            <person name="Grant M."/>
        </authorList>
    </citation>
    <scope>INDUCTION BY ABSCISIC ACID</scope>
</reference>
<reference key="9">
    <citation type="journal article" date="2009" name="Plant J.">
        <title>A role for circadian evening elements in cold-regulated gene expression in Arabidopsis.</title>
        <authorList>
            <person name="Mikkelsen M.D."/>
            <person name="Thomashow M.F."/>
        </authorList>
    </citation>
    <scope>INDUCTION BY COLD</scope>
</reference>
<reference key="10">
    <citation type="journal article" date="2016" name="Plant Cell">
        <title>Blue light- and low temperature-regulated COR27 and COR28 play roles in the Arabidopsis circadian clock.</title>
        <authorList>
            <person name="Li X."/>
            <person name="Ma D."/>
            <person name="Lu S.X."/>
            <person name="Hu X."/>
            <person name="Huang R."/>
            <person name="Liang T."/>
            <person name="Xu T."/>
            <person name="Tobin E.M."/>
            <person name="Liu H."/>
        </authorList>
    </citation>
    <scope>FUNCTION</scope>
    <scope>DISRUPTION PHENOTYPE</scope>
    <scope>REPRESSION BY CCA1</scope>
    <scope>INDUCTION BY DARKNESS AND COLD</scope>
    <source>
        <strain>cv. Columbia</strain>
    </source>
</reference>
<reference key="11">
    <citation type="journal article" date="2017" name="J. Integr. Plant Biol.">
        <title>COR27 and COR28 encode nighttime repressors integrating Arabidopsis circadian clock and cold response.</title>
        <authorList>
            <person name="Wang P."/>
            <person name="Cui X."/>
            <person name="Zhao C."/>
            <person name="Shi L."/>
            <person name="Zhang G."/>
            <person name="Sun F."/>
            <person name="Cao X."/>
            <person name="Yuan L."/>
            <person name="Xie Q."/>
            <person name="Xu X."/>
        </authorList>
    </citation>
    <scope>FUNCTION</scope>
    <scope>DISRUPTION PHENOTYPE</scope>
    <scope>INDUCTION BY DARKNESS AND COLD</scope>
    <scope>REPRESSION BY CCA1</scope>
    <scope>SUBCELLULAR LOCATION</scope>
    <source>
        <strain>cv. Columbia</strain>
    </source>
</reference>
<accession>Q8L8T7</accession>
<accession>F4K352</accession>
<accession>Q3E7U9</accession>
<accession>Q9FMM9</accession>
<feature type="chain" id="PRO_0000447852" description="Cold-regulated protein 27">
    <location>
        <begin position="1"/>
        <end position="246"/>
    </location>
</feature>
<feature type="region of interest" description="Disordered" evidence="1">
    <location>
        <begin position="1"/>
        <end position="39"/>
    </location>
</feature>
<feature type="region of interest" description="Disordered" evidence="1">
    <location>
        <begin position="151"/>
        <end position="232"/>
    </location>
</feature>
<feature type="compositionally biased region" description="Low complexity" evidence="1">
    <location>
        <begin position="168"/>
        <end position="180"/>
    </location>
</feature>
<feature type="splice variant" id="VSP_060271" description="In isoform 2.">
    <location>
        <position position="193"/>
    </location>
</feature>
<name>COR27_ARATH</name>
<gene>
    <name evidence="7" type="primary">COR27</name>
    <name evidence="9" type="ordered locus">At5g42900</name>
    <name evidence="10" type="ORF">MBD2.9</name>
</gene>
<keyword id="KW-0025">Alternative splicing</keyword>
<keyword id="KW-0090">Biological rhythms</keyword>
<keyword id="KW-0539">Nucleus</keyword>
<keyword id="KW-1185">Reference proteome</keyword>
<keyword id="KW-0678">Repressor</keyword>
<keyword id="KW-0804">Transcription</keyword>
<keyword id="KW-0805">Transcription regulation</keyword>
<comment type="function">
    <text evidence="5 6">Together with COR28, involved in central circadian clock regulation and in flowering promotion, by binding to the chromatin of clock-associated evening genes TOC1, PRR5, ELF4 and cold-responsive genes in order to repress their transcription (PubMed:27837007, PubMed:27990760). Negative regulator of freezing tolerance (PubMed:27837007).</text>
</comment>
<comment type="interaction">
    <interactant intactId="EBI-25516197">
        <id>Q8L8T7</id>
    </interactant>
    <interactant intactId="EBI-25506855">
        <id>O23160</id>
        <label>MYB73</label>
    </interactant>
    <organismsDiffer>false</organismsDiffer>
    <experiments>3</experiments>
</comment>
<comment type="subcellular location">
    <subcellularLocation>
        <location evidence="6">Nucleus</location>
    </subcellularLocation>
</comment>
<comment type="alternative products">
    <event type="alternative splicing"/>
    <isoform>
        <id>Q8L8T7-1</id>
        <name>1</name>
        <sequence type="displayed"/>
    </isoform>
    <isoform>
        <id>Q8L8T7-2</id>
        <name>2</name>
        <sequence type="described" ref="VSP_060271"/>
    </isoform>
</comment>
<comment type="induction">
    <text evidence="2 3 4 5 6">Regulated by the circadian clock at warm growth temperatures as direct targets of CCA1, with highest levels from noon to dusk (PubMed:19566593, PubMed:27837007, PubMed:27990760). Repressed by CCA1 at the transcription level via chromatin binding and in a temperature-dependent way (PubMed:19566593, PubMed:27837007, PubMed:27990760). 6 hours after inoculation with the yellow strain of cucumber mosaic virus [CMV(Y)], strongly induced in resistant cultivars (cv. C24) but repressed in sensitive cultivars (cv. Columbia) (PubMed:15111722). Strongly induced by abscisic acid (ABA) (PubMed:17304219). Rapidly induced by cold, but in a circadian rhythm-dependent manner and regulated by CCA1 (PubMed:19566593, PubMed:27837007). Transcription is repressed by blue and red lights, but induced by darkness; by contrast, present at low levels in darkness but accumulates in blue light (at protein level) due to transcription auto-repression (PubMed:27837007).</text>
</comment>
<comment type="disruption phenotype">
    <text evidence="5 6">Period lengthening of various circadian output rhythms and affected central clock gene expression (PubMed:27837007). Derepressed expression of circadian-regulated and cold-responsive genes (PubMed:27990760). Delayed flowering under long days conditions, and slightly in short days (PubMed:27837007). Increased freezing tolerance (PubMed:27837007).</text>
</comment>
<comment type="sequence caution" evidence="8">
    <conflict type="erroneous gene model prediction">
        <sequence resource="EMBL-CDS" id="BAB09191"/>
    </conflict>
</comment>
<sequence>MVGDYRGRFSSRRFSDDSDDSSDDASSVEGETTSSMYSAGKEYMETEWTNEKHSLYLKSMEASFVDQLYNSLGALGKNENVSESTRFGSGRKPSQEQFKVLHDGFWQKINVKQPEHRINGRHGGNSHEFLRSPWIKHYKPLVKTQIPVTDEPENQVVSSSNGKKGICSSGSASSLKQLSSHSRDHDQISVGEAEVSDQNFVNEGIKGENGSSKKMKTVMMSESSSTDQVVPLNKLLQHDVNLKSVS</sequence>